<sequence>MTTLRLLISDSYDPWFNLAVEECIFRQMPATQRVLFLWRNADTVVIGRAQNPWKECNTRRMEEDNVRLARRSSGGGAVFHDLGNTCFTFMAGKPEYDKTISTHIVLAALNSLGVMADASGRNDLVVKTPDGDRKVSGSAYRETKDRGFHHGTLLLNADLSRLANYLNPDKKKLAAKGITSVRSRVANLTELLPGITHEQVCQAVTEAFFAHYGERVDAEVISPDKTPDLPNFAETFARQSSWEWNFGQAPAFSHLLDERFTWGGVELHFDVEKGVITRAQVFTDSLNPAPLEALGERLQGCQYRVDVLEQACESLIAEFPAQKGELRELAAWMAQAVR</sequence>
<name>LPLA_SALEP</name>
<protein>
    <recommendedName>
        <fullName evidence="1">Lipoate-protein ligase A</fullName>
        <ecNumber evidence="1">6.3.1.20</ecNumber>
    </recommendedName>
    <alternativeName>
        <fullName evidence="1">Lipoate--protein ligase</fullName>
    </alternativeName>
</protein>
<accession>B5R2K1</accession>
<reference key="1">
    <citation type="journal article" date="2008" name="Genome Res.">
        <title>Comparative genome analysis of Salmonella enteritidis PT4 and Salmonella gallinarum 287/91 provides insights into evolutionary and host adaptation pathways.</title>
        <authorList>
            <person name="Thomson N.R."/>
            <person name="Clayton D.J."/>
            <person name="Windhorst D."/>
            <person name="Vernikos G."/>
            <person name="Davidson S."/>
            <person name="Churcher C."/>
            <person name="Quail M.A."/>
            <person name="Stevens M."/>
            <person name="Jones M.A."/>
            <person name="Watson M."/>
            <person name="Barron A."/>
            <person name="Layton A."/>
            <person name="Pickard D."/>
            <person name="Kingsley R.A."/>
            <person name="Bignell A."/>
            <person name="Clark L."/>
            <person name="Harris B."/>
            <person name="Ormond D."/>
            <person name="Abdellah Z."/>
            <person name="Brooks K."/>
            <person name="Cherevach I."/>
            <person name="Chillingworth T."/>
            <person name="Woodward J."/>
            <person name="Norberczak H."/>
            <person name="Lord A."/>
            <person name="Arrowsmith C."/>
            <person name="Jagels K."/>
            <person name="Moule S."/>
            <person name="Mungall K."/>
            <person name="Saunders M."/>
            <person name="Whitehead S."/>
            <person name="Chabalgoity J.A."/>
            <person name="Maskell D."/>
            <person name="Humphreys T."/>
            <person name="Roberts M."/>
            <person name="Barrow P.A."/>
            <person name="Dougan G."/>
            <person name="Parkhill J."/>
        </authorList>
    </citation>
    <scope>NUCLEOTIDE SEQUENCE [LARGE SCALE GENOMIC DNA]</scope>
    <source>
        <strain>P125109</strain>
    </source>
</reference>
<comment type="function">
    <text evidence="1">Catalyzes both the ATP-dependent activation of exogenously supplied lipoate to lipoyl-AMP and the transfer of the activated lipoyl onto the lipoyl domains of lipoate-dependent enzymes.</text>
</comment>
<comment type="catalytic activity">
    <reaction evidence="1">
        <text>L-lysyl-[lipoyl-carrier protein] + (R)-lipoate + ATP = N(6)-[(R)-lipoyl]-L-lysyl-[lipoyl-carrier protein] + AMP + diphosphate + H(+)</text>
        <dbReference type="Rhea" id="RHEA:49288"/>
        <dbReference type="Rhea" id="RHEA-COMP:10500"/>
        <dbReference type="Rhea" id="RHEA-COMP:10502"/>
        <dbReference type="ChEBI" id="CHEBI:15378"/>
        <dbReference type="ChEBI" id="CHEBI:29969"/>
        <dbReference type="ChEBI" id="CHEBI:30616"/>
        <dbReference type="ChEBI" id="CHEBI:33019"/>
        <dbReference type="ChEBI" id="CHEBI:83088"/>
        <dbReference type="ChEBI" id="CHEBI:83099"/>
        <dbReference type="ChEBI" id="CHEBI:456215"/>
        <dbReference type="EC" id="6.3.1.20"/>
    </reaction>
</comment>
<comment type="pathway">
    <text evidence="1">Protein modification; protein lipoylation via exogenous pathway; protein N(6)-(lipoyl)lysine from lipoate: step 1/2.</text>
</comment>
<comment type="pathway">
    <text evidence="1">Protein modification; protein lipoylation via exogenous pathway; protein N(6)-(lipoyl)lysine from lipoate: step 2/2.</text>
</comment>
<comment type="subunit">
    <text evidence="1">Monomer.</text>
</comment>
<comment type="subcellular location">
    <subcellularLocation>
        <location evidence="1">Cytoplasm</location>
    </subcellularLocation>
</comment>
<comment type="miscellaneous">
    <text evidence="1">In the transfer reaction, the free carboxyl group of lipoic acid is attached via an amide linkage to the epsilon-amino group of a specific lysine residue of lipoyl domains of lipoate-dependent enzymes.</text>
</comment>
<comment type="similarity">
    <text evidence="1">Belongs to the LplA family.</text>
</comment>
<evidence type="ECO:0000255" key="1">
    <source>
        <dbReference type="HAMAP-Rule" id="MF_01602"/>
    </source>
</evidence>
<evidence type="ECO:0000255" key="2">
    <source>
        <dbReference type="PROSITE-ProRule" id="PRU01067"/>
    </source>
</evidence>
<dbReference type="EC" id="6.3.1.20" evidence="1"/>
<dbReference type="EMBL" id="AM933172">
    <property type="protein sequence ID" value="CAR35885.1"/>
    <property type="molecule type" value="Genomic_DNA"/>
</dbReference>
<dbReference type="RefSeq" id="WP_000209763.1">
    <property type="nucleotide sequence ID" value="NC_011294.1"/>
</dbReference>
<dbReference type="SMR" id="B5R2K1"/>
<dbReference type="KEGG" id="set:SEN4332"/>
<dbReference type="HOGENOM" id="CLU_022986_0_1_6"/>
<dbReference type="UniPathway" id="UPA00537">
    <property type="reaction ID" value="UER00594"/>
</dbReference>
<dbReference type="UniPathway" id="UPA00537">
    <property type="reaction ID" value="UER00595"/>
</dbReference>
<dbReference type="Proteomes" id="UP000000613">
    <property type="component" value="Chromosome"/>
</dbReference>
<dbReference type="GO" id="GO:0005829">
    <property type="term" value="C:cytosol"/>
    <property type="evidence" value="ECO:0007669"/>
    <property type="project" value="TreeGrafter"/>
</dbReference>
<dbReference type="GO" id="GO:0005524">
    <property type="term" value="F:ATP binding"/>
    <property type="evidence" value="ECO:0007669"/>
    <property type="project" value="UniProtKB-KW"/>
</dbReference>
<dbReference type="GO" id="GO:0016979">
    <property type="term" value="F:lipoate-protein ligase activity"/>
    <property type="evidence" value="ECO:0007669"/>
    <property type="project" value="UniProtKB-UniRule"/>
</dbReference>
<dbReference type="GO" id="GO:0017118">
    <property type="term" value="F:lipoyltransferase activity"/>
    <property type="evidence" value="ECO:0007669"/>
    <property type="project" value="TreeGrafter"/>
</dbReference>
<dbReference type="GO" id="GO:0036211">
    <property type="term" value="P:protein modification process"/>
    <property type="evidence" value="ECO:0007669"/>
    <property type="project" value="InterPro"/>
</dbReference>
<dbReference type="CDD" id="cd16443">
    <property type="entry name" value="LplA"/>
    <property type="match status" value="1"/>
</dbReference>
<dbReference type="FunFam" id="3.30.930.10:FF:000024">
    <property type="entry name" value="Lipoate-protein ligase A"/>
    <property type="match status" value="1"/>
</dbReference>
<dbReference type="Gene3D" id="3.30.930.10">
    <property type="entry name" value="Bira Bifunctional Protein, Domain 2"/>
    <property type="match status" value="1"/>
</dbReference>
<dbReference type="Gene3D" id="3.30.390.50">
    <property type="entry name" value="CO dehydrogenase flavoprotein, C-terminal domain"/>
    <property type="match status" value="1"/>
</dbReference>
<dbReference type="HAMAP" id="MF_01602">
    <property type="entry name" value="LplA"/>
    <property type="match status" value="1"/>
</dbReference>
<dbReference type="InterPro" id="IPR045864">
    <property type="entry name" value="aa-tRNA-synth_II/BPL/LPL"/>
</dbReference>
<dbReference type="InterPro" id="IPR004143">
    <property type="entry name" value="BPL_LPL_catalytic"/>
</dbReference>
<dbReference type="InterPro" id="IPR023741">
    <property type="entry name" value="Lipoate_ligase_A"/>
</dbReference>
<dbReference type="InterPro" id="IPR019491">
    <property type="entry name" value="Lipoate_protein_ligase_C"/>
</dbReference>
<dbReference type="InterPro" id="IPR004562">
    <property type="entry name" value="LipoylTrfase_LipoateP_Ligase"/>
</dbReference>
<dbReference type="NCBIfam" id="TIGR00545">
    <property type="entry name" value="lipoyltrans"/>
    <property type="match status" value="1"/>
</dbReference>
<dbReference type="PANTHER" id="PTHR12561">
    <property type="entry name" value="LIPOATE-PROTEIN LIGASE"/>
    <property type="match status" value="1"/>
</dbReference>
<dbReference type="PANTHER" id="PTHR12561:SF3">
    <property type="entry name" value="LIPOYLTRANSFERASE 1, MITOCHONDRIAL"/>
    <property type="match status" value="1"/>
</dbReference>
<dbReference type="Pfam" id="PF10437">
    <property type="entry name" value="Lip_prot_lig_C"/>
    <property type="match status" value="1"/>
</dbReference>
<dbReference type="Pfam" id="PF21948">
    <property type="entry name" value="LplA-B_cat"/>
    <property type="match status" value="1"/>
</dbReference>
<dbReference type="SUPFAM" id="SSF55681">
    <property type="entry name" value="Class II aaRS and biotin synthetases"/>
    <property type="match status" value="1"/>
</dbReference>
<dbReference type="SUPFAM" id="SSF82649">
    <property type="entry name" value="SufE/NifU"/>
    <property type="match status" value="1"/>
</dbReference>
<dbReference type="PROSITE" id="PS51733">
    <property type="entry name" value="BPL_LPL_CATALYTIC"/>
    <property type="match status" value="1"/>
</dbReference>
<gene>
    <name evidence="1" type="primary">lplA</name>
    <name type="ordered locus">SEN4332</name>
</gene>
<feature type="chain" id="PRO_1000148112" description="Lipoate-protein ligase A">
    <location>
        <begin position="1"/>
        <end position="338"/>
    </location>
</feature>
<feature type="domain" description="BPL/LPL catalytic" evidence="2">
    <location>
        <begin position="29"/>
        <end position="216"/>
    </location>
</feature>
<feature type="binding site" evidence="1">
    <location>
        <position position="71"/>
    </location>
    <ligand>
        <name>ATP</name>
        <dbReference type="ChEBI" id="CHEBI:30616"/>
    </ligand>
</feature>
<feature type="binding site" evidence="1">
    <location>
        <begin position="76"/>
        <end position="79"/>
    </location>
    <ligand>
        <name>ATP</name>
        <dbReference type="ChEBI" id="CHEBI:30616"/>
    </ligand>
</feature>
<feature type="binding site" evidence="1">
    <location>
        <position position="134"/>
    </location>
    <ligand>
        <name>(R)-lipoate</name>
        <dbReference type="ChEBI" id="CHEBI:83088"/>
    </ligand>
</feature>
<feature type="binding site" evidence="1">
    <location>
        <position position="134"/>
    </location>
    <ligand>
        <name>ATP</name>
        <dbReference type="ChEBI" id="CHEBI:30616"/>
    </ligand>
</feature>
<organism>
    <name type="scientific">Salmonella enteritidis PT4 (strain P125109)</name>
    <dbReference type="NCBI Taxonomy" id="550537"/>
    <lineage>
        <taxon>Bacteria</taxon>
        <taxon>Pseudomonadati</taxon>
        <taxon>Pseudomonadota</taxon>
        <taxon>Gammaproteobacteria</taxon>
        <taxon>Enterobacterales</taxon>
        <taxon>Enterobacteriaceae</taxon>
        <taxon>Salmonella</taxon>
    </lineage>
</organism>
<keyword id="KW-0067">ATP-binding</keyword>
<keyword id="KW-0963">Cytoplasm</keyword>
<keyword id="KW-0436">Ligase</keyword>
<keyword id="KW-0547">Nucleotide-binding</keyword>
<proteinExistence type="inferred from homology"/>